<organism>
    <name type="scientific">Cucumis sativus</name>
    <name type="common">Cucumber</name>
    <dbReference type="NCBI Taxonomy" id="3659"/>
    <lineage>
        <taxon>Eukaryota</taxon>
        <taxon>Viridiplantae</taxon>
        <taxon>Streptophyta</taxon>
        <taxon>Embryophyta</taxon>
        <taxon>Tracheophyta</taxon>
        <taxon>Spermatophyta</taxon>
        <taxon>Magnoliopsida</taxon>
        <taxon>eudicotyledons</taxon>
        <taxon>Gunneridae</taxon>
        <taxon>Pentapetalae</taxon>
        <taxon>rosids</taxon>
        <taxon>fabids</taxon>
        <taxon>Cucurbitales</taxon>
        <taxon>Cucurbitaceae</taxon>
        <taxon>Benincaseae</taxon>
        <taxon>Cucumis</taxon>
    </lineage>
</organism>
<comment type="function">
    <text evidence="1">One of the primary rRNA binding proteins, it binds directly to 16S rRNA where it nucleates assembly of the head domain of the 30S subunit.</text>
</comment>
<comment type="subunit">
    <text>Part of the 30S ribosomal subunit.</text>
</comment>
<comment type="subcellular location">
    <subcellularLocation>
        <location>Plastid</location>
        <location>Chloroplast</location>
    </subcellularLocation>
</comment>
<comment type="similarity">
    <text evidence="3">Belongs to the universal ribosomal protein uS7 family.</text>
</comment>
<reference key="1">
    <citation type="journal article" date="2006" name="Plant Cell Rep.">
        <title>Complete sequence and organization of the cucumber (Cucumis sativus L. cv. Baekmibaekdadagi) chloroplast genome.</title>
        <authorList>
            <person name="Kim J.-S."/>
            <person name="Jung J.D."/>
            <person name="Lee J.-A."/>
            <person name="Park H.-W."/>
            <person name="Oh K.-H."/>
            <person name="Jeong W.J."/>
            <person name="Choi D.-W."/>
            <person name="Liu J.R."/>
            <person name="Cho K.Y."/>
        </authorList>
    </citation>
    <scope>NUCLEOTIDE SEQUENCE [LARGE SCALE GENOMIC DNA]</scope>
    <source>
        <strain>cv. Baekmibaekdadagi</strain>
    </source>
</reference>
<reference key="2">
    <citation type="journal article" date="2007" name="Cell. Mol. Biol. Lett.">
        <title>The complete structure of the cucumber (Cucumis sativus L.) chloroplast genome: its composition and comparative analysis.</title>
        <authorList>
            <person name="Plader W.W."/>
            <person name="Yukawa Y."/>
            <person name="Sugiura M."/>
            <person name="Malepszy S."/>
        </authorList>
    </citation>
    <scope>NUCLEOTIDE SEQUENCE [LARGE SCALE GENOMIC DNA]</scope>
    <source>
        <strain>cv. Borszczagowski</strain>
    </source>
</reference>
<reference key="3">
    <citation type="journal article" date="2007" name="Genome">
        <title>Sequencing cucumber (Cucumis sativus L.) chloroplast genomes identifies differences between chilling-tolerant and -susceptible cucumber lines.</title>
        <authorList>
            <person name="Chung S.-M."/>
            <person name="Gordon V.S."/>
            <person name="Staub J.E."/>
        </authorList>
    </citation>
    <scope>NUCLEOTIDE SEQUENCE [LARGE SCALE GENOMIC DNA]</scope>
    <source>
        <strain>cv. Chipper</strain>
        <strain>cv. Gy14</strain>
    </source>
</reference>
<protein>
    <recommendedName>
        <fullName evidence="2">Small ribosomal subunit protein uS7cz/uS7cy</fullName>
    </recommendedName>
    <alternativeName>
        <fullName>30S ribosomal protein S7, chloroplastic</fullName>
    </alternativeName>
</protein>
<sequence>MSRRGTAEEKIEKSDPIYRNRLVNMLVNRILKHGKKSLAYQIIYRAMKKIQQKTETNPLSVLRQAIRGVTPDIAVKARRVGGSTHQVPIEIGSTQGKALAIRWLLGASRKRPGRNMAFKFSSELVDAAKGSGDAIRKKEETHRMAEANRAFAHFR</sequence>
<keyword id="KW-0150">Chloroplast</keyword>
<keyword id="KW-0934">Plastid</keyword>
<keyword id="KW-0687">Ribonucleoprotein</keyword>
<keyword id="KW-0689">Ribosomal protein</keyword>
<keyword id="KW-0694">RNA-binding</keyword>
<keyword id="KW-0699">rRNA-binding</keyword>
<evidence type="ECO:0000250" key="1"/>
<evidence type="ECO:0000255" key="2">
    <source>
        <dbReference type="HAMAP-Rule" id="MF_00480"/>
    </source>
</evidence>
<evidence type="ECO:0000305" key="3"/>
<geneLocation type="chloroplast"/>
<dbReference type="EMBL" id="DQ119058">
    <property type="protein sequence ID" value="AAZ94695.1"/>
    <property type="molecule type" value="Genomic_DNA"/>
</dbReference>
<dbReference type="EMBL" id="DQ119058">
    <property type="protein sequence ID" value="AAZ94712.1"/>
    <property type="molecule type" value="Genomic_DNA"/>
</dbReference>
<dbReference type="EMBL" id="AJ970307">
    <property type="protein sequence ID" value="CAJ00804.1"/>
    <property type="molecule type" value="Genomic_DNA"/>
</dbReference>
<dbReference type="EMBL" id="AJ970307">
    <property type="protein sequence ID" value="CAJ00818.1"/>
    <property type="molecule type" value="Genomic_DNA"/>
</dbReference>
<dbReference type="EMBL" id="DQ865975">
    <property type="protein sequence ID" value="ABI97460.1"/>
    <property type="molecule type" value="Genomic_DNA"/>
</dbReference>
<dbReference type="EMBL" id="DQ865975">
    <property type="protein sequence ID" value="ABI97473.1"/>
    <property type="molecule type" value="Genomic_DNA"/>
</dbReference>
<dbReference type="EMBL" id="DQ865976">
    <property type="protein sequence ID" value="ABI98791.1"/>
    <property type="molecule type" value="Genomic_DNA"/>
</dbReference>
<dbReference type="EMBL" id="DQ865976">
    <property type="protein sequence ID" value="ABI98804.1"/>
    <property type="molecule type" value="Genomic_DNA"/>
</dbReference>
<dbReference type="SMR" id="Q4VZK9"/>
<dbReference type="EnsemblPlants" id="KGN56684">
    <property type="protein sequence ID" value="KGN56684"/>
    <property type="gene ID" value="Csa_3G128920"/>
</dbReference>
<dbReference type="Gramene" id="KGN56684">
    <property type="protein sequence ID" value="KGN56684"/>
    <property type="gene ID" value="Csa_3G128920"/>
</dbReference>
<dbReference type="KEGG" id="csv:3429316"/>
<dbReference type="KEGG" id="csv:3429317"/>
<dbReference type="eggNOG" id="KOG3291">
    <property type="taxonomic scope" value="Eukaryota"/>
</dbReference>
<dbReference type="OMA" id="DDTHRMA"/>
<dbReference type="OrthoDB" id="35139at2759"/>
<dbReference type="GO" id="GO:0009507">
    <property type="term" value="C:chloroplast"/>
    <property type="evidence" value="ECO:0007669"/>
    <property type="project" value="UniProtKB-SubCell"/>
</dbReference>
<dbReference type="GO" id="GO:0015935">
    <property type="term" value="C:small ribosomal subunit"/>
    <property type="evidence" value="ECO:0007669"/>
    <property type="project" value="InterPro"/>
</dbReference>
<dbReference type="GO" id="GO:0019843">
    <property type="term" value="F:rRNA binding"/>
    <property type="evidence" value="ECO:0007669"/>
    <property type="project" value="UniProtKB-UniRule"/>
</dbReference>
<dbReference type="GO" id="GO:0003735">
    <property type="term" value="F:structural constituent of ribosome"/>
    <property type="evidence" value="ECO:0007669"/>
    <property type="project" value="InterPro"/>
</dbReference>
<dbReference type="GO" id="GO:0006412">
    <property type="term" value="P:translation"/>
    <property type="evidence" value="ECO:0007669"/>
    <property type="project" value="UniProtKB-UniRule"/>
</dbReference>
<dbReference type="CDD" id="cd14871">
    <property type="entry name" value="uS7_Chloroplast"/>
    <property type="match status" value="1"/>
</dbReference>
<dbReference type="FunFam" id="1.10.455.10:FF:000001">
    <property type="entry name" value="30S ribosomal protein S7"/>
    <property type="match status" value="1"/>
</dbReference>
<dbReference type="Gene3D" id="1.10.455.10">
    <property type="entry name" value="Ribosomal protein S7 domain"/>
    <property type="match status" value="1"/>
</dbReference>
<dbReference type="HAMAP" id="MF_00480_B">
    <property type="entry name" value="Ribosomal_uS7_B"/>
    <property type="match status" value="1"/>
</dbReference>
<dbReference type="InterPro" id="IPR000235">
    <property type="entry name" value="Ribosomal_uS7"/>
</dbReference>
<dbReference type="InterPro" id="IPR005717">
    <property type="entry name" value="Ribosomal_uS7_bac/org-type"/>
</dbReference>
<dbReference type="InterPro" id="IPR020606">
    <property type="entry name" value="Ribosomal_uS7_CS"/>
</dbReference>
<dbReference type="InterPro" id="IPR023798">
    <property type="entry name" value="Ribosomal_uS7_dom"/>
</dbReference>
<dbReference type="InterPro" id="IPR036823">
    <property type="entry name" value="Ribosomal_uS7_dom_sf"/>
</dbReference>
<dbReference type="NCBIfam" id="TIGR01029">
    <property type="entry name" value="rpsG_bact"/>
    <property type="match status" value="1"/>
</dbReference>
<dbReference type="PANTHER" id="PTHR11205">
    <property type="entry name" value="RIBOSOMAL PROTEIN S7"/>
    <property type="match status" value="1"/>
</dbReference>
<dbReference type="Pfam" id="PF00177">
    <property type="entry name" value="Ribosomal_S7"/>
    <property type="match status" value="1"/>
</dbReference>
<dbReference type="PIRSF" id="PIRSF002122">
    <property type="entry name" value="RPS7p_RPS7a_RPS5e_RPS7o"/>
    <property type="match status" value="1"/>
</dbReference>
<dbReference type="SUPFAM" id="SSF47973">
    <property type="entry name" value="Ribosomal protein S7"/>
    <property type="match status" value="1"/>
</dbReference>
<dbReference type="PROSITE" id="PS00052">
    <property type="entry name" value="RIBOSOMAL_S7"/>
    <property type="match status" value="1"/>
</dbReference>
<proteinExistence type="inferred from homology"/>
<accession>Q4VZK9</accession>
<accession>A5J1Y0</accession>
<name>RR7_CUCSA</name>
<gene>
    <name type="primary">rps7-A</name>
    <name type="ordered locus">CsCp089</name>
</gene>
<gene>
    <name type="primary">rps7-B</name>
    <name type="ordered locus">CsCp124</name>
</gene>
<feature type="chain" id="PRO_0000277036" description="Small ribosomal subunit protein uS7cz/uS7cy">
    <location>
        <begin position="1"/>
        <end position="155"/>
    </location>
</feature>